<sequence>MGDLWVLLFSSLSLAAFHGVRGCLECDPKFTEDVRTLLGNLVPLEVPDRNQLLDRQHKEITHISSKVSHKDKMLRLLAVRNVIKLREWLKDEFYRLGNETWKGVFIIQGNLLEIRQNLEKKLTQIIKNFSEVACSEDCIVIEGPVLDCWNCLRMTTRCFKGDYCQDEDPKTAENREISLYLIFIAEAVILASAVLLFHVCISHRRKMKAIRRTLKTYLEKKLEELVEMIYKDDGEKNLEFGRSNSNSLTGEPTCAESEMQTGT</sequence>
<proteinExistence type="evidence at protein level"/>
<feature type="signal peptide" evidence="1">
    <location>
        <begin position="1"/>
        <end position="22"/>
    </location>
</feature>
<feature type="chain" id="PRO_0000342458" description="Izumo sperm-egg fusion protein 3">
    <location>
        <begin position="23"/>
        <end position="263"/>
    </location>
</feature>
<feature type="topological domain" description="Extracellular" evidence="1">
    <location>
        <begin position="23"/>
        <end position="176"/>
    </location>
</feature>
<feature type="transmembrane region" description="Helical" evidence="1">
    <location>
        <begin position="177"/>
        <end position="197"/>
    </location>
</feature>
<feature type="topological domain" description="Cytoplasmic" evidence="1">
    <location>
        <begin position="198"/>
        <end position="263"/>
    </location>
</feature>
<feature type="region of interest" description="Disordered" evidence="2">
    <location>
        <begin position="241"/>
        <end position="263"/>
    </location>
</feature>
<feature type="glycosylation site" description="N-linked (GlcNAc...) asparagine" evidence="1">
    <location>
        <position position="98"/>
    </location>
</feature>
<feature type="glycosylation site" description="N-linked (GlcNAc...) asparagine" evidence="1">
    <location>
        <position position="128"/>
    </location>
</feature>
<feature type="splice variant" id="VSP_034458" description="In isoform 2." evidence="5">
    <location>
        <begin position="1"/>
        <end position="153"/>
    </location>
</feature>
<feature type="sequence conflict" description="In Ref. 1; BAB24287." evidence="6" ref="1">
    <original>L</original>
    <variation>M</variation>
    <location>
        <position position="214"/>
    </location>
</feature>
<keyword id="KW-0025">Alternative splicing</keyword>
<keyword id="KW-1003">Cell membrane</keyword>
<keyword id="KW-0968">Cytoplasmic vesicle</keyword>
<keyword id="KW-0221">Differentiation</keyword>
<keyword id="KW-0325">Glycoprotein</keyword>
<keyword id="KW-0472">Membrane</keyword>
<keyword id="KW-1185">Reference proteome</keyword>
<keyword id="KW-0732">Signal</keyword>
<keyword id="KW-0744">Spermatogenesis</keyword>
<keyword id="KW-0812">Transmembrane</keyword>
<keyword id="KW-1133">Transmembrane helix</keyword>
<protein>
    <recommendedName>
        <fullName>Izumo sperm-egg fusion protein 3</fullName>
    </recommendedName>
</protein>
<reference key="1">
    <citation type="journal article" date="2005" name="Science">
        <title>The transcriptional landscape of the mammalian genome.</title>
        <authorList>
            <person name="Carninci P."/>
            <person name="Kasukawa T."/>
            <person name="Katayama S."/>
            <person name="Gough J."/>
            <person name="Frith M.C."/>
            <person name="Maeda N."/>
            <person name="Oyama R."/>
            <person name="Ravasi T."/>
            <person name="Lenhard B."/>
            <person name="Wells C."/>
            <person name="Kodzius R."/>
            <person name="Shimokawa K."/>
            <person name="Bajic V.B."/>
            <person name="Brenner S.E."/>
            <person name="Batalov S."/>
            <person name="Forrest A.R."/>
            <person name="Zavolan M."/>
            <person name="Davis M.J."/>
            <person name="Wilming L.G."/>
            <person name="Aidinis V."/>
            <person name="Allen J.E."/>
            <person name="Ambesi-Impiombato A."/>
            <person name="Apweiler R."/>
            <person name="Aturaliya R.N."/>
            <person name="Bailey T.L."/>
            <person name="Bansal M."/>
            <person name="Baxter L."/>
            <person name="Beisel K.W."/>
            <person name="Bersano T."/>
            <person name="Bono H."/>
            <person name="Chalk A.M."/>
            <person name="Chiu K.P."/>
            <person name="Choudhary V."/>
            <person name="Christoffels A."/>
            <person name="Clutterbuck D.R."/>
            <person name="Crowe M.L."/>
            <person name="Dalla E."/>
            <person name="Dalrymple B.P."/>
            <person name="de Bono B."/>
            <person name="Della Gatta G."/>
            <person name="di Bernardo D."/>
            <person name="Down T."/>
            <person name="Engstrom P."/>
            <person name="Fagiolini M."/>
            <person name="Faulkner G."/>
            <person name="Fletcher C.F."/>
            <person name="Fukushima T."/>
            <person name="Furuno M."/>
            <person name="Futaki S."/>
            <person name="Gariboldi M."/>
            <person name="Georgii-Hemming P."/>
            <person name="Gingeras T.R."/>
            <person name="Gojobori T."/>
            <person name="Green R.E."/>
            <person name="Gustincich S."/>
            <person name="Harbers M."/>
            <person name="Hayashi Y."/>
            <person name="Hensch T.K."/>
            <person name="Hirokawa N."/>
            <person name="Hill D."/>
            <person name="Huminiecki L."/>
            <person name="Iacono M."/>
            <person name="Ikeo K."/>
            <person name="Iwama A."/>
            <person name="Ishikawa T."/>
            <person name="Jakt M."/>
            <person name="Kanapin A."/>
            <person name="Katoh M."/>
            <person name="Kawasawa Y."/>
            <person name="Kelso J."/>
            <person name="Kitamura H."/>
            <person name="Kitano H."/>
            <person name="Kollias G."/>
            <person name="Krishnan S.P."/>
            <person name="Kruger A."/>
            <person name="Kummerfeld S.K."/>
            <person name="Kurochkin I.V."/>
            <person name="Lareau L.F."/>
            <person name="Lazarevic D."/>
            <person name="Lipovich L."/>
            <person name="Liu J."/>
            <person name="Liuni S."/>
            <person name="McWilliam S."/>
            <person name="Madan Babu M."/>
            <person name="Madera M."/>
            <person name="Marchionni L."/>
            <person name="Matsuda H."/>
            <person name="Matsuzawa S."/>
            <person name="Miki H."/>
            <person name="Mignone F."/>
            <person name="Miyake S."/>
            <person name="Morris K."/>
            <person name="Mottagui-Tabar S."/>
            <person name="Mulder N."/>
            <person name="Nakano N."/>
            <person name="Nakauchi H."/>
            <person name="Ng P."/>
            <person name="Nilsson R."/>
            <person name="Nishiguchi S."/>
            <person name="Nishikawa S."/>
            <person name="Nori F."/>
            <person name="Ohara O."/>
            <person name="Okazaki Y."/>
            <person name="Orlando V."/>
            <person name="Pang K.C."/>
            <person name="Pavan W.J."/>
            <person name="Pavesi G."/>
            <person name="Pesole G."/>
            <person name="Petrovsky N."/>
            <person name="Piazza S."/>
            <person name="Reed J."/>
            <person name="Reid J.F."/>
            <person name="Ring B.Z."/>
            <person name="Ringwald M."/>
            <person name="Rost B."/>
            <person name="Ruan Y."/>
            <person name="Salzberg S.L."/>
            <person name="Sandelin A."/>
            <person name="Schneider C."/>
            <person name="Schoenbach C."/>
            <person name="Sekiguchi K."/>
            <person name="Semple C.A."/>
            <person name="Seno S."/>
            <person name="Sessa L."/>
            <person name="Sheng Y."/>
            <person name="Shibata Y."/>
            <person name="Shimada H."/>
            <person name="Shimada K."/>
            <person name="Silva D."/>
            <person name="Sinclair B."/>
            <person name="Sperling S."/>
            <person name="Stupka E."/>
            <person name="Sugiura K."/>
            <person name="Sultana R."/>
            <person name="Takenaka Y."/>
            <person name="Taki K."/>
            <person name="Tammoja K."/>
            <person name="Tan S.L."/>
            <person name="Tang S."/>
            <person name="Taylor M.S."/>
            <person name="Tegner J."/>
            <person name="Teichmann S.A."/>
            <person name="Ueda H.R."/>
            <person name="van Nimwegen E."/>
            <person name="Verardo R."/>
            <person name="Wei C.L."/>
            <person name="Yagi K."/>
            <person name="Yamanishi H."/>
            <person name="Zabarovsky E."/>
            <person name="Zhu S."/>
            <person name="Zimmer A."/>
            <person name="Hide W."/>
            <person name="Bult C."/>
            <person name="Grimmond S.M."/>
            <person name="Teasdale R.D."/>
            <person name="Liu E.T."/>
            <person name="Brusic V."/>
            <person name="Quackenbush J."/>
            <person name="Wahlestedt C."/>
            <person name="Mattick J.S."/>
            <person name="Hume D.A."/>
            <person name="Kai C."/>
            <person name="Sasaki D."/>
            <person name="Tomaru Y."/>
            <person name="Fukuda S."/>
            <person name="Kanamori-Katayama M."/>
            <person name="Suzuki M."/>
            <person name="Aoki J."/>
            <person name="Arakawa T."/>
            <person name="Iida J."/>
            <person name="Imamura K."/>
            <person name="Itoh M."/>
            <person name="Kato T."/>
            <person name="Kawaji H."/>
            <person name="Kawagashira N."/>
            <person name="Kawashima T."/>
            <person name="Kojima M."/>
            <person name="Kondo S."/>
            <person name="Konno H."/>
            <person name="Nakano K."/>
            <person name="Ninomiya N."/>
            <person name="Nishio T."/>
            <person name="Okada M."/>
            <person name="Plessy C."/>
            <person name="Shibata K."/>
            <person name="Shiraki T."/>
            <person name="Suzuki S."/>
            <person name="Tagami M."/>
            <person name="Waki K."/>
            <person name="Watahiki A."/>
            <person name="Okamura-Oho Y."/>
            <person name="Suzuki H."/>
            <person name="Kawai J."/>
            <person name="Hayashizaki Y."/>
        </authorList>
    </citation>
    <scope>NUCLEOTIDE SEQUENCE [LARGE SCALE MRNA] (ISOFORM 2)</scope>
    <source>
        <strain>C57BL/6J</strain>
        <tissue>Testis</tissue>
    </source>
</reference>
<reference key="2">
    <citation type="journal article" date="2009" name="PLoS Biol.">
        <title>Lineage-specific biology revealed by a finished genome assembly of the mouse.</title>
        <authorList>
            <person name="Church D.M."/>
            <person name="Goodstadt L."/>
            <person name="Hillier L.W."/>
            <person name="Zody M.C."/>
            <person name="Goldstein S."/>
            <person name="She X."/>
            <person name="Bult C.J."/>
            <person name="Agarwala R."/>
            <person name="Cherry J.L."/>
            <person name="DiCuccio M."/>
            <person name="Hlavina W."/>
            <person name="Kapustin Y."/>
            <person name="Meric P."/>
            <person name="Maglott D."/>
            <person name="Birtle Z."/>
            <person name="Marques A.C."/>
            <person name="Graves T."/>
            <person name="Zhou S."/>
            <person name="Teague B."/>
            <person name="Potamousis K."/>
            <person name="Churas C."/>
            <person name="Place M."/>
            <person name="Herschleb J."/>
            <person name="Runnheim R."/>
            <person name="Forrest D."/>
            <person name="Amos-Landgraf J."/>
            <person name="Schwartz D.C."/>
            <person name="Cheng Z."/>
            <person name="Lindblad-Toh K."/>
            <person name="Eichler E.E."/>
            <person name="Ponting C.P."/>
        </authorList>
    </citation>
    <scope>NUCLEOTIDE SEQUENCE [LARGE SCALE GENOMIC DNA]</scope>
    <source>
        <strain>C57BL/6J</strain>
    </source>
</reference>
<reference key="3">
    <citation type="journal article" date="2004" name="Genome Res.">
        <title>The status, quality, and expansion of the NIH full-length cDNA project: the Mammalian Gene Collection (MGC).</title>
        <authorList>
            <consortium name="The MGC Project Team"/>
        </authorList>
    </citation>
    <scope>NUCLEOTIDE SEQUENCE [LARGE SCALE MRNA] (ISOFORM 1)</scope>
    <source>
        <tissue>Testis</tissue>
    </source>
</reference>
<reference key="4">
    <citation type="journal article" date="2009" name="Mol. Reprod. Dev.">
        <title>Izumo is part of a multiprotein family whose members form large complexes on mammalian sperm.</title>
        <authorList>
            <person name="Ellerman D.A."/>
            <person name="Pei J."/>
            <person name="Gupta S."/>
            <person name="Snell W.J."/>
            <person name="Myles D."/>
            <person name="Primakoff P."/>
        </authorList>
    </citation>
    <scope>SUBUNIT</scope>
    <scope>TISSUE SPECIFICITY</scope>
    <scope>GENE FAMILY</scope>
    <scope>NOMENCLATURE</scope>
</reference>
<reference key="5">
    <citation type="journal article" date="2021" name="Mol. Reprod. Dev.">
        <title>IZUMO family member 3, IZUMO3, is involved in male fertility through the acrosome formation.</title>
        <authorList>
            <person name="Inoue N."/>
            <person name="Satouh Y."/>
            <person name="Wada I."/>
        </authorList>
    </citation>
    <scope>FUNCTION</scope>
    <scope>SUBCELLULAR LOCATION</scope>
    <scope>DISRUPTION PHENOTYPE</scope>
</reference>
<name>IZUM3_MOUSE</name>
<evidence type="ECO:0000255" key="1"/>
<evidence type="ECO:0000256" key="2">
    <source>
        <dbReference type="SAM" id="MobiDB-lite"/>
    </source>
</evidence>
<evidence type="ECO:0000269" key="3">
    <source>
    </source>
</evidence>
<evidence type="ECO:0000269" key="4">
    <source>
    </source>
</evidence>
<evidence type="ECO:0000303" key="5">
    <source>
    </source>
</evidence>
<evidence type="ECO:0000305" key="6"/>
<comment type="function">
    <text evidence="4">Plays an important role in the biogenesis of the acrosome during sperm development.</text>
</comment>
<comment type="subunit">
    <text evidence="3">Monomer and homodimer.</text>
</comment>
<comment type="subcellular location">
    <subcellularLocation>
        <location evidence="6">Cell membrane</location>
        <topology evidence="6">Single-pass type I membrane protein</topology>
    </subcellularLocation>
    <subcellularLocation>
        <location evidence="4">Cytoplasmic vesicle</location>
        <location evidence="4">Secretory vesicle</location>
        <location evidence="4">Acrosome inner membrane</location>
    </subcellularLocation>
</comment>
<comment type="alternative products">
    <event type="alternative splicing"/>
    <isoform>
        <id>A6PWV3-1</id>
        <name>1</name>
        <sequence type="displayed"/>
    </isoform>
    <isoform>
        <id>A6PWV3-2</id>
        <name>2</name>
        <sequence type="described" ref="VSP_034458"/>
    </isoform>
</comment>
<comment type="tissue specificity">
    <text evidence="3">Sperm-specific (at protein level).</text>
</comment>
<comment type="disruption phenotype">
    <text evidence="4">Male mice show impaired fertility and almost all of the spermatozoa show an aberrant acrosome shape.</text>
</comment>
<comment type="miscellaneous">
    <text>Izumo is the name of a Japanese shrine to marriage.</text>
</comment>
<comment type="similarity">
    <text evidence="6">Belongs to the Izumo family.</text>
</comment>
<comment type="sequence caution" evidence="6">
    <conflict type="frameshift">
        <sequence resource="EMBL" id="BC099579"/>
    </conflict>
</comment>
<organism>
    <name type="scientific">Mus musculus</name>
    <name type="common">Mouse</name>
    <dbReference type="NCBI Taxonomy" id="10090"/>
    <lineage>
        <taxon>Eukaryota</taxon>
        <taxon>Metazoa</taxon>
        <taxon>Chordata</taxon>
        <taxon>Craniata</taxon>
        <taxon>Vertebrata</taxon>
        <taxon>Euteleostomi</taxon>
        <taxon>Mammalia</taxon>
        <taxon>Eutheria</taxon>
        <taxon>Euarchontoglires</taxon>
        <taxon>Glires</taxon>
        <taxon>Rodentia</taxon>
        <taxon>Myomorpha</taxon>
        <taxon>Muroidea</taxon>
        <taxon>Muridae</taxon>
        <taxon>Murinae</taxon>
        <taxon>Mus</taxon>
        <taxon>Mus</taxon>
    </lineage>
</organism>
<gene>
    <name type="primary">Izumo3</name>
</gene>
<dbReference type="EMBL" id="AK005867">
    <property type="protein sequence ID" value="BAB24287.1"/>
    <property type="molecule type" value="mRNA"/>
</dbReference>
<dbReference type="EMBL" id="AL807382">
    <property type="status" value="NOT_ANNOTATED_CDS"/>
    <property type="molecule type" value="Genomic_DNA"/>
</dbReference>
<dbReference type="EMBL" id="BC099579">
    <property type="status" value="NOT_ANNOTATED_CDS"/>
    <property type="molecule type" value="mRNA"/>
</dbReference>
<dbReference type="CCDS" id="CCDS51231.1">
    <molecule id="A6PWV3-1"/>
</dbReference>
<dbReference type="RefSeq" id="NP_081310.1">
    <molecule id="A6PWV3-1"/>
    <property type="nucleotide sequence ID" value="NM_027034.1"/>
</dbReference>
<dbReference type="STRING" id="10090.ENSMUSP00000102725"/>
<dbReference type="GlyCosmos" id="A6PWV3">
    <property type="glycosylation" value="2 sites, No reported glycans"/>
</dbReference>
<dbReference type="GlyGen" id="A6PWV3">
    <property type="glycosylation" value="2 sites"/>
</dbReference>
<dbReference type="SwissPalm" id="A6PWV3"/>
<dbReference type="PaxDb" id="10090-ENSMUSP00000102725"/>
<dbReference type="ProteomicsDB" id="269354">
    <molecule id="A6PWV3-1"/>
</dbReference>
<dbReference type="Antibodypedia" id="49567">
    <property type="antibodies" value="1 antibodies from 1 providers"/>
</dbReference>
<dbReference type="Ensembl" id="ENSMUST00000107108.8">
    <molecule id="A6PWV3-1"/>
    <property type="protein sequence ID" value="ENSMUSP00000102725.2"/>
    <property type="gene ID" value="ENSMUSG00000028533.11"/>
</dbReference>
<dbReference type="GeneID" id="69314"/>
<dbReference type="KEGG" id="mmu:69314"/>
<dbReference type="UCSC" id="uc012dha.1">
    <molecule id="A6PWV3-1"/>
    <property type="organism name" value="mouse"/>
</dbReference>
<dbReference type="AGR" id="MGI:1916564"/>
<dbReference type="CTD" id="100129669"/>
<dbReference type="MGI" id="MGI:1916564">
    <property type="gene designation" value="Izumo3"/>
</dbReference>
<dbReference type="VEuPathDB" id="HostDB:ENSMUSG00000028533"/>
<dbReference type="eggNOG" id="ENOG502S8ID">
    <property type="taxonomic scope" value="Eukaryota"/>
</dbReference>
<dbReference type="GeneTree" id="ENSGT00390000017601"/>
<dbReference type="HOGENOM" id="CLU_103188_0_0_1"/>
<dbReference type="InParanoid" id="A6PWV3"/>
<dbReference type="OMA" id="WKGVFLW"/>
<dbReference type="OrthoDB" id="9892356at2759"/>
<dbReference type="PhylomeDB" id="A6PWV3"/>
<dbReference type="TreeFam" id="TF339468"/>
<dbReference type="Reactome" id="R-MMU-1300645">
    <property type="pathway name" value="Acrosome Reaction and Sperm:Oocyte Membrane Binding"/>
</dbReference>
<dbReference type="BioGRID-ORCS" id="69314">
    <property type="hits" value="3 hits in 75 CRISPR screens"/>
</dbReference>
<dbReference type="PRO" id="PR:A6PWV3"/>
<dbReference type="Proteomes" id="UP000000589">
    <property type="component" value="Chromosome 4"/>
</dbReference>
<dbReference type="RNAct" id="A6PWV3">
    <property type="molecule type" value="protein"/>
</dbReference>
<dbReference type="Bgee" id="ENSMUSG00000028533">
    <property type="expression patterns" value="Expressed in spermatid and 11 other cell types or tissues"/>
</dbReference>
<dbReference type="ExpressionAtlas" id="A6PWV3">
    <property type="expression patterns" value="baseline and differential"/>
</dbReference>
<dbReference type="GO" id="GO:0002079">
    <property type="term" value="C:inner acrosomal membrane"/>
    <property type="evidence" value="ECO:0000314"/>
    <property type="project" value="UniProtKB"/>
</dbReference>
<dbReference type="GO" id="GO:0005886">
    <property type="term" value="C:plasma membrane"/>
    <property type="evidence" value="ECO:0007669"/>
    <property type="project" value="UniProtKB-SubCell"/>
</dbReference>
<dbReference type="GO" id="GO:0042803">
    <property type="term" value="F:protein homodimerization activity"/>
    <property type="evidence" value="ECO:0000314"/>
    <property type="project" value="UniProtKB"/>
</dbReference>
<dbReference type="GO" id="GO:0001675">
    <property type="term" value="P:acrosome assembly"/>
    <property type="evidence" value="ECO:0000315"/>
    <property type="project" value="UniProtKB"/>
</dbReference>
<dbReference type="InterPro" id="IPR029389">
    <property type="entry name" value="IZUMO"/>
</dbReference>
<dbReference type="PANTHER" id="PTHR36470">
    <property type="entry name" value="IZUMO SPERM-EGG FUSION PROTEIN 3"/>
    <property type="match status" value="1"/>
</dbReference>
<dbReference type="PANTHER" id="PTHR36470:SF1">
    <property type="entry name" value="IZUMO SPERM-EGG FUSION PROTEIN 3"/>
    <property type="match status" value="1"/>
</dbReference>
<dbReference type="Pfam" id="PF15005">
    <property type="entry name" value="IZUMO"/>
    <property type="match status" value="1"/>
</dbReference>
<accession>A6PWV3</accession>
<accession>Q9DAG1</accession>